<sequence>MSADNVSSIDPEKERISRERREKLAKWRAKKALMDSQNELKKETVPLEVKNSKITNNENDSTSRSKLLERQHKLQEWKRKKREREEEQLIKEQENTKETSSHSKKKNKKQNRGSQKRQITFDDSDDETTGESKDSFDKSEIVVEKSDMSGSKNNNEDDPLEAYMKSLVNGGQPLNHKIGENILDEDGDDNSIEEDDEFSNSESDEESSRYKRISKAKAKKKVKEIKFTIKDLEPFPKSFYSEPDEVKLMTDDEVEEMRLSLGGIKVKGKHCPKLITRWSQLGLPTDIMNLITKELKYDEPTAIQSQAIPAIMSGRDLIGISKTGSGKTISYILPMLRQIKAQRTLSKNETGPLGLILAPTRELALQINEEVEKFTKQDRSIRTICCTGGSEMKKQINDLKRGVEIVVATPGRLIDILTLNSGKLISTKRITFVVMDEADRLFDMGFEPQITQIMKTVRPDKQCVLFSATFPNKLRSFAARILTDPLTVTINSNNLVNENVNQSFYIEDNENDKFNRLVNILDGFYKVNKNITSNSEEREIDEEVSDKKIIIFVSSQQFCDLLYSKLENFGYFPYTIHAGKPYQERVMNLEKFKTTTNSILLCTEVLSRGLNVPEVSLVIIYNAAKTFAQYVHTTGRTARGTHKGDAITLLLPDELAAAYILKRALRERELSSIDPQMVEDMKQMSERFESGMKEGKYKLSKGFGGKGLDNLDTKREEKQQEEKHKLDKIENDESTPSTSYKTTDNASSSSEVDSVTIPKLEFTIDRDKNIDSTISFTAIVNVNDLPQLVRWEATKNTTLMFIKHETGCSITNKGKYYPEGKGPTSNKDQPKLYLQIEGKEEKDVLLSIELLEQKVREGIKKVEYQSIKSTKY</sequence>
<name>PRP5_VANPO</name>
<reference key="1">
    <citation type="journal article" date="2007" name="Proc. Natl. Acad. Sci. U.S.A.">
        <title>Independent sorting-out of thousands of duplicated gene pairs in two yeast species descended from a whole-genome duplication.</title>
        <authorList>
            <person name="Scannell D.R."/>
            <person name="Frank A.C."/>
            <person name="Conant G.C."/>
            <person name="Byrne K.P."/>
            <person name="Woolfit M."/>
            <person name="Wolfe K.H."/>
        </authorList>
    </citation>
    <scope>NUCLEOTIDE SEQUENCE [LARGE SCALE GENOMIC DNA]</scope>
    <source>
        <strain>ATCC 22028 / DSM 70294 / BCRC 21397 / CBS 2163 / NBRC 10782 / NRRL Y-8283 / UCD 57-17</strain>
    </source>
</reference>
<proteinExistence type="inferred from homology"/>
<evidence type="ECO:0000250" key="1"/>
<evidence type="ECO:0000255" key="2">
    <source>
        <dbReference type="PROSITE-ProRule" id="PRU00541"/>
    </source>
</evidence>
<evidence type="ECO:0000255" key="3">
    <source>
        <dbReference type="PROSITE-ProRule" id="PRU00542"/>
    </source>
</evidence>
<evidence type="ECO:0000256" key="4">
    <source>
        <dbReference type="SAM" id="MobiDB-lite"/>
    </source>
</evidence>
<evidence type="ECO:0000305" key="5"/>
<organism>
    <name type="scientific">Vanderwaltozyma polyspora (strain ATCC 22028 / DSM 70294 / BCRC 21397 / CBS 2163 / NBRC 10782 / NRRL Y-8283 / UCD 57-17)</name>
    <name type="common">Kluyveromyces polysporus</name>
    <dbReference type="NCBI Taxonomy" id="436907"/>
    <lineage>
        <taxon>Eukaryota</taxon>
        <taxon>Fungi</taxon>
        <taxon>Dikarya</taxon>
        <taxon>Ascomycota</taxon>
        <taxon>Saccharomycotina</taxon>
        <taxon>Saccharomycetes</taxon>
        <taxon>Saccharomycetales</taxon>
        <taxon>Saccharomycetaceae</taxon>
        <taxon>Vanderwaltozyma</taxon>
    </lineage>
</organism>
<dbReference type="EC" id="3.6.4.13"/>
<dbReference type="EMBL" id="DS480402">
    <property type="protein sequence ID" value="EDO17551.1"/>
    <property type="molecule type" value="Genomic_DNA"/>
</dbReference>
<dbReference type="RefSeq" id="XP_001645409.1">
    <property type="nucleotide sequence ID" value="XM_001645359.1"/>
</dbReference>
<dbReference type="SMR" id="A7TJK8"/>
<dbReference type="FunCoup" id="A7TJK8">
    <property type="interactions" value="1110"/>
</dbReference>
<dbReference type="STRING" id="436907.A7TJK8"/>
<dbReference type="GeneID" id="5545774"/>
<dbReference type="KEGG" id="vpo:Kpol_534p31"/>
<dbReference type="eggNOG" id="KOG0334">
    <property type="taxonomic scope" value="Eukaryota"/>
</dbReference>
<dbReference type="HOGENOM" id="CLU_003041_0_2_1"/>
<dbReference type="InParanoid" id="A7TJK8"/>
<dbReference type="OMA" id="FAQYVHT"/>
<dbReference type="OrthoDB" id="196131at2759"/>
<dbReference type="PhylomeDB" id="A7TJK8"/>
<dbReference type="Proteomes" id="UP000000267">
    <property type="component" value="Unassembled WGS sequence"/>
</dbReference>
<dbReference type="GO" id="GO:0005634">
    <property type="term" value="C:nucleus"/>
    <property type="evidence" value="ECO:0007669"/>
    <property type="project" value="UniProtKB-SubCell"/>
</dbReference>
<dbReference type="GO" id="GO:0005524">
    <property type="term" value="F:ATP binding"/>
    <property type="evidence" value="ECO:0007669"/>
    <property type="project" value="UniProtKB-KW"/>
</dbReference>
<dbReference type="GO" id="GO:0016887">
    <property type="term" value="F:ATP hydrolysis activity"/>
    <property type="evidence" value="ECO:0007669"/>
    <property type="project" value="RHEA"/>
</dbReference>
<dbReference type="GO" id="GO:0003676">
    <property type="term" value="F:nucleic acid binding"/>
    <property type="evidence" value="ECO:0007669"/>
    <property type="project" value="InterPro"/>
</dbReference>
<dbReference type="GO" id="GO:0003724">
    <property type="term" value="F:RNA helicase activity"/>
    <property type="evidence" value="ECO:0007669"/>
    <property type="project" value="UniProtKB-EC"/>
</dbReference>
<dbReference type="GO" id="GO:0000348">
    <property type="term" value="P:mRNA branch site recognition"/>
    <property type="evidence" value="ECO:0007669"/>
    <property type="project" value="EnsemblFungi"/>
</dbReference>
<dbReference type="CDD" id="cd18787">
    <property type="entry name" value="SF2_C_DEAD"/>
    <property type="match status" value="1"/>
</dbReference>
<dbReference type="FunFam" id="3.40.50.300:FF:000079">
    <property type="entry name" value="probable ATP-dependent RNA helicase DDX17"/>
    <property type="match status" value="1"/>
</dbReference>
<dbReference type="Gene3D" id="3.40.50.300">
    <property type="entry name" value="P-loop containing nucleotide triphosphate hydrolases"/>
    <property type="match status" value="2"/>
</dbReference>
<dbReference type="InterPro" id="IPR011545">
    <property type="entry name" value="DEAD/DEAH_box_helicase_dom"/>
</dbReference>
<dbReference type="InterPro" id="IPR014001">
    <property type="entry name" value="Helicase_ATP-bd"/>
</dbReference>
<dbReference type="InterPro" id="IPR001650">
    <property type="entry name" value="Helicase_C-like"/>
</dbReference>
<dbReference type="InterPro" id="IPR027417">
    <property type="entry name" value="P-loop_NTPase"/>
</dbReference>
<dbReference type="InterPro" id="IPR056149">
    <property type="entry name" value="PRP5/DDX46/KHDC4_KH"/>
</dbReference>
<dbReference type="InterPro" id="IPR000629">
    <property type="entry name" value="RNA-helicase_DEAD-box_CS"/>
</dbReference>
<dbReference type="InterPro" id="IPR014014">
    <property type="entry name" value="RNA_helicase_DEAD_Q_motif"/>
</dbReference>
<dbReference type="PANTHER" id="PTHR47958">
    <property type="entry name" value="ATP-DEPENDENT RNA HELICASE DBP3"/>
    <property type="match status" value="1"/>
</dbReference>
<dbReference type="Pfam" id="PF00270">
    <property type="entry name" value="DEAD"/>
    <property type="match status" value="1"/>
</dbReference>
<dbReference type="Pfam" id="PF00271">
    <property type="entry name" value="Helicase_C"/>
    <property type="match status" value="1"/>
</dbReference>
<dbReference type="Pfam" id="PF23469">
    <property type="entry name" value="KH_12"/>
    <property type="match status" value="1"/>
</dbReference>
<dbReference type="SMART" id="SM00487">
    <property type="entry name" value="DEXDc"/>
    <property type="match status" value="1"/>
</dbReference>
<dbReference type="SMART" id="SM00490">
    <property type="entry name" value="HELICc"/>
    <property type="match status" value="1"/>
</dbReference>
<dbReference type="SUPFAM" id="SSF52540">
    <property type="entry name" value="P-loop containing nucleoside triphosphate hydrolases"/>
    <property type="match status" value="2"/>
</dbReference>
<dbReference type="PROSITE" id="PS00039">
    <property type="entry name" value="DEAD_ATP_HELICASE"/>
    <property type="match status" value="1"/>
</dbReference>
<dbReference type="PROSITE" id="PS51192">
    <property type="entry name" value="HELICASE_ATP_BIND_1"/>
    <property type="match status" value="1"/>
</dbReference>
<dbReference type="PROSITE" id="PS51194">
    <property type="entry name" value="HELICASE_CTER"/>
    <property type="match status" value="1"/>
</dbReference>
<dbReference type="PROSITE" id="PS51195">
    <property type="entry name" value="Q_MOTIF"/>
    <property type="match status" value="1"/>
</dbReference>
<gene>
    <name type="primary">PRP5</name>
    <name type="ORF">Kpol_534p31</name>
</gene>
<accession>A7TJK8</accession>
<protein>
    <recommendedName>
        <fullName>Pre-mRNA-processing ATP-dependent RNA helicase PRP5</fullName>
        <ecNumber>3.6.4.13</ecNumber>
    </recommendedName>
</protein>
<keyword id="KW-0067">ATP-binding</keyword>
<keyword id="KW-0347">Helicase</keyword>
<keyword id="KW-0378">Hydrolase</keyword>
<keyword id="KW-0507">mRNA processing</keyword>
<keyword id="KW-0508">mRNA splicing</keyword>
<keyword id="KW-0547">Nucleotide-binding</keyword>
<keyword id="KW-0539">Nucleus</keyword>
<keyword id="KW-1185">Reference proteome</keyword>
<comment type="function">
    <text evidence="1">ATP-dependent RNA helicase involved spliceosome assembly and in nuclear splicing. Catalyzes an ATP-dependent conformational change of U2 snRNP. Bridges U1 and U2 snRNPs and enables stable U2 snRNP association with intron RNA (By similarity).</text>
</comment>
<comment type="catalytic activity">
    <reaction>
        <text>ATP + H2O = ADP + phosphate + H(+)</text>
        <dbReference type="Rhea" id="RHEA:13065"/>
        <dbReference type="ChEBI" id="CHEBI:15377"/>
        <dbReference type="ChEBI" id="CHEBI:15378"/>
        <dbReference type="ChEBI" id="CHEBI:30616"/>
        <dbReference type="ChEBI" id="CHEBI:43474"/>
        <dbReference type="ChEBI" id="CHEBI:456216"/>
        <dbReference type="EC" id="3.6.4.13"/>
    </reaction>
</comment>
<comment type="subcellular location">
    <subcellularLocation>
        <location evidence="1">Nucleus</location>
    </subcellularLocation>
</comment>
<comment type="domain">
    <text>The Q motif is unique to and characteristic of the DEAD box family of RNA helicases and controls ATP binding and hydrolysis.</text>
</comment>
<comment type="similarity">
    <text evidence="5">Belongs to the DEAD box helicase family. DDX46/PRP5 subfamily.</text>
</comment>
<feature type="chain" id="PRO_0000310228" description="Pre-mRNA-processing ATP-dependent RNA helicase PRP5">
    <location>
        <begin position="1"/>
        <end position="872"/>
    </location>
</feature>
<feature type="domain" description="Helicase ATP-binding" evidence="2">
    <location>
        <begin position="308"/>
        <end position="488"/>
    </location>
</feature>
<feature type="domain" description="Helicase C-terminal" evidence="3">
    <location>
        <begin position="539"/>
        <end position="685"/>
    </location>
</feature>
<feature type="region of interest" description="Disordered" evidence="4">
    <location>
        <begin position="1"/>
        <end position="21"/>
    </location>
</feature>
<feature type="region of interest" description="Disordered" evidence="4">
    <location>
        <begin position="34"/>
        <end position="213"/>
    </location>
</feature>
<feature type="region of interest" description="Disordered" evidence="4">
    <location>
        <begin position="708"/>
        <end position="752"/>
    </location>
</feature>
<feature type="short sequence motif" description="Q motif">
    <location>
        <begin position="276"/>
        <end position="305"/>
    </location>
</feature>
<feature type="short sequence motif" description="DEAD box">
    <location>
        <begin position="436"/>
        <end position="439"/>
    </location>
</feature>
<feature type="compositionally biased region" description="Basic and acidic residues" evidence="4">
    <location>
        <begin position="10"/>
        <end position="21"/>
    </location>
</feature>
<feature type="compositionally biased region" description="Basic and acidic residues" evidence="4">
    <location>
        <begin position="61"/>
        <end position="101"/>
    </location>
</feature>
<feature type="compositionally biased region" description="Basic residues" evidence="4">
    <location>
        <begin position="102"/>
        <end position="115"/>
    </location>
</feature>
<feature type="compositionally biased region" description="Basic and acidic residues" evidence="4">
    <location>
        <begin position="130"/>
        <end position="147"/>
    </location>
</feature>
<feature type="compositionally biased region" description="Acidic residues" evidence="4">
    <location>
        <begin position="182"/>
        <end position="205"/>
    </location>
</feature>
<feature type="compositionally biased region" description="Basic and acidic residues" evidence="4">
    <location>
        <begin position="709"/>
        <end position="731"/>
    </location>
</feature>
<feature type="compositionally biased region" description="Polar residues" evidence="4">
    <location>
        <begin position="734"/>
        <end position="752"/>
    </location>
</feature>
<feature type="binding site" evidence="2">
    <location>
        <begin position="321"/>
        <end position="328"/>
    </location>
    <ligand>
        <name>ATP</name>
        <dbReference type="ChEBI" id="CHEBI:30616"/>
    </ligand>
</feature>